<sequence>MSMKNKLKNFFSMEDEEYEYEYIETERESHEEHEQKEKPAYNGNKPAGKQNVVSLQSVQKSSKVVLSEPRVYAEAQEIADHLKNRRAVVVNLQRIQHDQAKRIVDFLSGTVYAIGGDIQRIGSDIFLCTPDNVDVSGTISELISEDEHQRW</sequence>
<name>SEPF_BACSU</name>
<accession>O31728</accession>
<comment type="function">
    <text evidence="2 3">Cell division protein that is part of the divisome complex and is recruited early to the Z-ring. Probably stimulates Z-ring formation, perhaps through the cross-linking of FtsZ protofilaments. Its function overlaps with FtsA.</text>
</comment>
<comment type="subunit">
    <text evidence="3">Homodimer. Interacts with FtsZ.</text>
</comment>
<comment type="interaction">
    <interactant intactId="EBI-2122748">
        <id>O31728</id>
    </interactant>
    <interactant intactId="EBI-1569853">
        <id>P17865</id>
        <label>ftsZ</label>
    </interactant>
    <organismsDiffer>false</organismsDiffer>
    <experiments>8</experiments>
</comment>
<comment type="interaction">
    <interactant intactId="EBI-2122748">
        <id>O31728</id>
    </interactant>
    <interactant intactId="EBI-2122748">
        <id>O31728</id>
        <label>sepF</label>
    </interactant>
    <organismsDiffer>false</organismsDiffer>
    <experiments>4</experiments>
</comment>
<comment type="subcellular location">
    <subcellularLocation>
        <location evidence="2 3">Cytoplasm</location>
    </subcellularLocation>
    <text>Localizes to the division site, in a FtsZ-dependent manner.</text>
</comment>
<comment type="similarity">
    <text evidence="4">Belongs to the SepF family.</text>
</comment>
<feature type="chain" id="PRO_0000333984" description="Cell division protein SepF">
    <location>
        <begin position="1"/>
        <end position="151"/>
    </location>
</feature>
<feature type="region of interest" description="Disordered" evidence="1">
    <location>
        <begin position="23"/>
        <end position="53"/>
    </location>
</feature>
<feature type="compositionally biased region" description="Basic and acidic residues" evidence="1">
    <location>
        <begin position="24"/>
        <end position="39"/>
    </location>
</feature>
<feature type="strand" evidence="5">
    <location>
        <begin position="62"/>
        <end position="67"/>
    </location>
</feature>
<feature type="helix" evidence="5">
    <location>
        <begin position="72"/>
        <end position="74"/>
    </location>
</feature>
<feature type="helix" evidence="5">
    <location>
        <begin position="75"/>
        <end position="83"/>
    </location>
</feature>
<feature type="strand" evidence="5">
    <location>
        <begin position="87"/>
        <end position="91"/>
    </location>
</feature>
<feature type="strand" evidence="5">
    <location>
        <begin position="93"/>
        <end position="95"/>
    </location>
</feature>
<feature type="helix" evidence="5">
    <location>
        <begin position="97"/>
        <end position="114"/>
    </location>
</feature>
<feature type="strand" evidence="5">
    <location>
        <begin position="117"/>
        <end position="122"/>
    </location>
</feature>
<feature type="strand" evidence="5">
    <location>
        <begin position="125"/>
        <end position="129"/>
    </location>
</feature>
<feature type="strand" evidence="5">
    <location>
        <begin position="133"/>
        <end position="137"/>
    </location>
</feature>
<dbReference type="EMBL" id="AL009126">
    <property type="protein sequence ID" value="CAB13413.3"/>
    <property type="molecule type" value="Genomic_DNA"/>
</dbReference>
<dbReference type="PIR" id="F69876">
    <property type="entry name" value="F69876"/>
</dbReference>
<dbReference type="RefSeq" id="NP_389422.3">
    <property type="nucleotide sequence ID" value="NC_000964.3"/>
</dbReference>
<dbReference type="RefSeq" id="WP_003244791.1">
    <property type="nucleotide sequence ID" value="NZ_OZ025638.1"/>
</dbReference>
<dbReference type="PDB" id="3ZIH">
    <property type="method" value="X-ray"/>
    <property type="resolution" value="2.00 A"/>
    <property type="chains" value="A/B=57-151"/>
</dbReference>
<dbReference type="PDB" id="3ZII">
    <property type="method" value="X-ray"/>
    <property type="resolution" value="2.20 A"/>
    <property type="chains" value="A=57-151"/>
</dbReference>
<dbReference type="PDB" id="8HZQ">
    <property type="method" value="NMR"/>
    <property type="chains" value="A/B=60-139"/>
</dbReference>
<dbReference type="PDB" id="8HZT">
    <property type="method" value="NMR"/>
    <property type="chains" value="A/B=60-139"/>
</dbReference>
<dbReference type="PDBsum" id="3ZIH"/>
<dbReference type="PDBsum" id="3ZII"/>
<dbReference type="PDBsum" id="8HZQ"/>
<dbReference type="PDBsum" id="8HZT"/>
<dbReference type="SMR" id="O31728"/>
<dbReference type="FunCoup" id="O31728">
    <property type="interactions" value="17"/>
</dbReference>
<dbReference type="IntAct" id="O31728">
    <property type="interactions" value="4"/>
</dbReference>
<dbReference type="MINT" id="O31728"/>
<dbReference type="STRING" id="224308.BSU15390"/>
<dbReference type="jPOST" id="O31728"/>
<dbReference type="PaxDb" id="224308-BSU15390"/>
<dbReference type="EnsemblBacteria" id="CAB13413">
    <property type="protein sequence ID" value="CAB13413"/>
    <property type="gene ID" value="BSU_15390"/>
</dbReference>
<dbReference type="GeneID" id="939952"/>
<dbReference type="KEGG" id="bsu:BSU15390"/>
<dbReference type="PATRIC" id="fig|224308.179.peg.1677"/>
<dbReference type="eggNOG" id="COG1799">
    <property type="taxonomic scope" value="Bacteria"/>
</dbReference>
<dbReference type="InParanoid" id="O31728"/>
<dbReference type="OrthoDB" id="9815206at2"/>
<dbReference type="BioCyc" id="BSUB:BSU15390-MONOMER"/>
<dbReference type="EvolutionaryTrace" id="O31728"/>
<dbReference type="Proteomes" id="UP000001570">
    <property type="component" value="Chromosome"/>
</dbReference>
<dbReference type="GO" id="GO:0005737">
    <property type="term" value="C:cytoplasm"/>
    <property type="evidence" value="ECO:0007669"/>
    <property type="project" value="UniProtKB-SubCell"/>
</dbReference>
<dbReference type="GO" id="GO:0042802">
    <property type="term" value="F:identical protein binding"/>
    <property type="evidence" value="ECO:0000353"/>
    <property type="project" value="IntAct"/>
</dbReference>
<dbReference type="GO" id="GO:0090529">
    <property type="term" value="P:cell septum assembly"/>
    <property type="evidence" value="ECO:0000315"/>
    <property type="project" value="CACAO"/>
</dbReference>
<dbReference type="GO" id="GO:0000917">
    <property type="term" value="P:division septum assembly"/>
    <property type="evidence" value="ECO:0007669"/>
    <property type="project" value="UniProtKB-KW"/>
</dbReference>
<dbReference type="GO" id="GO:0043093">
    <property type="term" value="P:FtsZ-dependent cytokinesis"/>
    <property type="evidence" value="ECO:0007669"/>
    <property type="project" value="UniProtKB-UniRule"/>
</dbReference>
<dbReference type="FunFam" id="3.30.110.150:FF:000002">
    <property type="entry name" value="Cell division protein SepF"/>
    <property type="match status" value="1"/>
</dbReference>
<dbReference type="Gene3D" id="3.30.110.150">
    <property type="entry name" value="SepF-like protein"/>
    <property type="match status" value="1"/>
</dbReference>
<dbReference type="HAMAP" id="MF_01197">
    <property type="entry name" value="SepF"/>
    <property type="match status" value="1"/>
</dbReference>
<dbReference type="InterPro" id="IPR023052">
    <property type="entry name" value="Cell_div_SepF"/>
</dbReference>
<dbReference type="InterPro" id="IPR007561">
    <property type="entry name" value="Cell_div_SepF/SepF-rel"/>
</dbReference>
<dbReference type="InterPro" id="IPR038594">
    <property type="entry name" value="SepF-like_sf"/>
</dbReference>
<dbReference type="PANTHER" id="PTHR35798">
    <property type="entry name" value="CELL DIVISION PROTEIN SEPF"/>
    <property type="match status" value="1"/>
</dbReference>
<dbReference type="PANTHER" id="PTHR35798:SF1">
    <property type="entry name" value="CELL DIVISION PROTEIN SEPF"/>
    <property type="match status" value="1"/>
</dbReference>
<dbReference type="Pfam" id="PF04472">
    <property type="entry name" value="SepF"/>
    <property type="match status" value="1"/>
</dbReference>
<reference key="1">
    <citation type="journal article" date="1997" name="Nature">
        <title>The complete genome sequence of the Gram-positive bacterium Bacillus subtilis.</title>
        <authorList>
            <person name="Kunst F."/>
            <person name="Ogasawara N."/>
            <person name="Moszer I."/>
            <person name="Albertini A.M."/>
            <person name="Alloni G."/>
            <person name="Azevedo V."/>
            <person name="Bertero M.G."/>
            <person name="Bessieres P."/>
            <person name="Bolotin A."/>
            <person name="Borchert S."/>
            <person name="Borriss R."/>
            <person name="Boursier L."/>
            <person name="Brans A."/>
            <person name="Braun M."/>
            <person name="Brignell S.C."/>
            <person name="Bron S."/>
            <person name="Brouillet S."/>
            <person name="Bruschi C.V."/>
            <person name="Caldwell B."/>
            <person name="Capuano V."/>
            <person name="Carter N.M."/>
            <person name="Choi S.-K."/>
            <person name="Codani J.-J."/>
            <person name="Connerton I.F."/>
            <person name="Cummings N.J."/>
            <person name="Daniel R.A."/>
            <person name="Denizot F."/>
            <person name="Devine K.M."/>
            <person name="Duesterhoeft A."/>
            <person name="Ehrlich S.D."/>
            <person name="Emmerson P.T."/>
            <person name="Entian K.-D."/>
            <person name="Errington J."/>
            <person name="Fabret C."/>
            <person name="Ferrari E."/>
            <person name="Foulger D."/>
            <person name="Fritz C."/>
            <person name="Fujita M."/>
            <person name="Fujita Y."/>
            <person name="Fuma S."/>
            <person name="Galizzi A."/>
            <person name="Galleron N."/>
            <person name="Ghim S.-Y."/>
            <person name="Glaser P."/>
            <person name="Goffeau A."/>
            <person name="Golightly E.J."/>
            <person name="Grandi G."/>
            <person name="Guiseppi G."/>
            <person name="Guy B.J."/>
            <person name="Haga K."/>
            <person name="Haiech J."/>
            <person name="Harwood C.R."/>
            <person name="Henaut A."/>
            <person name="Hilbert H."/>
            <person name="Holsappel S."/>
            <person name="Hosono S."/>
            <person name="Hullo M.-F."/>
            <person name="Itaya M."/>
            <person name="Jones L.-M."/>
            <person name="Joris B."/>
            <person name="Karamata D."/>
            <person name="Kasahara Y."/>
            <person name="Klaerr-Blanchard M."/>
            <person name="Klein C."/>
            <person name="Kobayashi Y."/>
            <person name="Koetter P."/>
            <person name="Koningstein G."/>
            <person name="Krogh S."/>
            <person name="Kumano M."/>
            <person name="Kurita K."/>
            <person name="Lapidus A."/>
            <person name="Lardinois S."/>
            <person name="Lauber J."/>
            <person name="Lazarevic V."/>
            <person name="Lee S.-M."/>
            <person name="Levine A."/>
            <person name="Liu H."/>
            <person name="Masuda S."/>
            <person name="Mauel C."/>
            <person name="Medigue C."/>
            <person name="Medina N."/>
            <person name="Mellado R.P."/>
            <person name="Mizuno M."/>
            <person name="Moestl D."/>
            <person name="Nakai S."/>
            <person name="Noback M."/>
            <person name="Noone D."/>
            <person name="O'Reilly M."/>
            <person name="Ogawa K."/>
            <person name="Ogiwara A."/>
            <person name="Oudega B."/>
            <person name="Park S.-H."/>
            <person name="Parro V."/>
            <person name="Pohl T.M."/>
            <person name="Portetelle D."/>
            <person name="Porwollik S."/>
            <person name="Prescott A.M."/>
            <person name="Presecan E."/>
            <person name="Pujic P."/>
            <person name="Purnelle B."/>
            <person name="Rapoport G."/>
            <person name="Rey M."/>
            <person name="Reynolds S."/>
            <person name="Rieger M."/>
            <person name="Rivolta C."/>
            <person name="Rocha E."/>
            <person name="Roche B."/>
            <person name="Rose M."/>
            <person name="Sadaie Y."/>
            <person name="Sato T."/>
            <person name="Scanlan E."/>
            <person name="Schleich S."/>
            <person name="Schroeter R."/>
            <person name="Scoffone F."/>
            <person name="Sekiguchi J."/>
            <person name="Sekowska A."/>
            <person name="Seror S.J."/>
            <person name="Serror P."/>
            <person name="Shin B.-S."/>
            <person name="Soldo B."/>
            <person name="Sorokin A."/>
            <person name="Tacconi E."/>
            <person name="Takagi T."/>
            <person name="Takahashi H."/>
            <person name="Takemaru K."/>
            <person name="Takeuchi M."/>
            <person name="Tamakoshi A."/>
            <person name="Tanaka T."/>
            <person name="Terpstra P."/>
            <person name="Tognoni A."/>
            <person name="Tosato V."/>
            <person name="Uchiyama S."/>
            <person name="Vandenbol M."/>
            <person name="Vannier F."/>
            <person name="Vassarotti A."/>
            <person name="Viari A."/>
            <person name="Wambutt R."/>
            <person name="Wedler E."/>
            <person name="Wedler H."/>
            <person name="Weitzenegger T."/>
            <person name="Winters P."/>
            <person name="Wipat A."/>
            <person name="Yamamoto H."/>
            <person name="Yamane K."/>
            <person name="Yasumoto K."/>
            <person name="Yata K."/>
            <person name="Yoshida K."/>
            <person name="Yoshikawa H.-F."/>
            <person name="Zumstein E."/>
            <person name="Yoshikawa H."/>
            <person name="Danchin A."/>
        </authorList>
    </citation>
    <scope>NUCLEOTIDE SEQUENCE [LARGE SCALE GENOMIC DNA]</scope>
    <source>
        <strain>168</strain>
    </source>
</reference>
<reference key="2">
    <citation type="journal article" date="2009" name="Microbiology">
        <title>From a consortium sequence to a unified sequence: the Bacillus subtilis 168 reference genome a decade later.</title>
        <authorList>
            <person name="Barbe V."/>
            <person name="Cruveiller S."/>
            <person name="Kunst F."/>
            <person name="Lenoble P."/>
            <person name="Meurice G."/>
            <person name="Sekowska A."/>
            <person name="Vallenet D."/>
            <person name="Wang T."/>
            <person name="Moszer I."/>
            <person name="Medigue C."/>
            <person name="Danchin A."/>
        </authorList>
    </citation>
    <scope>SEQUENCE REVISION TO 5; 31 AND 88</scope>
</reference>
<reference key="3">
    <citation type="journal article" date="2006" name="Mol. Microbiol.">
        <title>SepF, a novel FtsZ-interacting protein required for a late step in cell division.</title>
        <authorList>
            <person name="Hamoen L.W."/>
            <person name="Meile J.-C."/>
            <person name="de Jong W."/>
            <person name="Noirot P."/>
            <person name="Errington J."/>
        </authorList>
    </citation>
    <scope>FUNCTION IN CELL DIVISION</scope>
    <scope>SUBCELLULAR LOCATION</scope>
    <source>
        <strain>168</strain>
    </source>
</reference>
<reference key="4">
    <citation type="journal article" date="2006" name="Mol. Microbiol.">
        <title>A new FtsZ-interacting protein, YlmF, complements the activity of FtsA during progression of cell division in Bacillus subtilis.</title>
        <authorList>
            <person name="Ishikawa S."/>
            <person name="Kawai Y."/>
            <person name="Hiramatsu K."/>
            <person name="Kuwano M."/>
            <person name="Ogasawara N."/>
        </authorList>
    </citation>
    <scope>FUNCTION IN CELL DIVISION</scope>
    <scope>SUBCELLULAR LOCATION</scope>
    <scope>SUBUNIT</scope>
    <scope>INTERACTION WITH FTSZ</scope>
    <source>
        <strain>168</strain>
    </source>
</reference>
<keyword id="KW-0002">3D-structure</keyword>
<keyword id="KW-0131">Cell cycle</keyword>
<keyword id="KW-0132">Cell division</keyword>
<keyword id="KW-0963">Cytoplasm</keyword>
<keyword id="KW-1185">Reference proteome</keyword>
<keyword id="KW-0717">Septation</keyword>
<proteinExistence type="evidence at protein level"/>
<protein>
    <recommendedName>
        <fullName>Cell division protein SepF</fullName>
    </recommendedName>
</protein>
<gene>
    <name type="primary">sepF</name>
    <name type="synonym">ylmF</name>
    <name type="ordered locus">BSU15390</name>
</gene>
<evidence type="ECO:0000256" key="1">
    <source>
        <dbReference type="SAM" id="MobiDB-lite"/>
    </source>
</evidence>
<evidence type="ECO:0000269" key="2">
    <source>
    </source>
</evidence>
<evidence type="ECO:0000269" key="3">
    <source>
    </source>
</evidence>
<evidence type="ECO:0000305" key="4"/>
<evidence type="ECO:0007829" key="5">
    <source>
        <dbReference type="PDB" id="3ZIH"/>
    </source>
</evidence>
<organism>
    <name type="scientific">Bacillus subtilis (strain 168)</name>
    <dbReference type="NCBI Taxonomy" id="224308"/>
    <lineage>
        <taxon>Bacteria</taxon>
        <taxon>Bacillati</taxon>
        <taxon>Bacillota</taxon>
        <taxon>Bacilli</taxon>
        <taxon>Bacillales</taxon>
        <taxon>Bacillaceae</taxon>
        <taxon>Bacillus</taxon>
    </lineage>
</organism>